<accession>P0C1J5</accession>
<accession>I1CET4</accession>
<sequence length="209" mass="22582">MRFSLLALLGTIVATSVSALKEPPTQLQVGVKKRIPASECTRKSHSGDELSMHYTGTLFDTGEKFDSSLDRNEPFVFTLGAGQVIQGWDQGLLGMCVGEKRRLVIPPHLGYGERGAGGVIPGGATLVFEVELLEIKPGKYNQKAMPVQQQQESPISFTSPSFLVSTGIIVALFLIVFKMAKKQDIAEANEKAAAATAEASTEKKEEKKE</sequence>
<reference key="1">
    <citation type="journal article" date="2009" name="PLoS Genet.">
        <title>Genomic analysis of the basal lineage fungus Rhizopus oryzae reveals a whole-genome duplication.</title>
        <authorList>
            <person name="Ma L.-J."/>
            <person name="Ibrahim A.S."/>
            <person name="Skory C."/>
            <person name="Grabherr M.G."/>
            <person name="Burger G."/>
            <person name="Butler M."/>
            <person name="Elias M."/>
            <person name="Idnurm A."/>
            <person name="Lang B.F."/>
            <person name="Sone T."/>
            <person name="Abe A."/>
            <person name="Calvo S.E."/>
            <person name="Corrochano L.M."/>
            <person name="Engels R."/>
            <person name="Fu J."/>
            <person name="Hansberg W."/>
            <person name="Kim J.-M."/>
            <person name="Kodira C.D."/>
            <person name="Koehrsen M.J."/>
            <person name="Liu B."/>
            <person name="Miranda-Saavedra D."/>
            <person name="O'Leary S."/>
            <person name="Ortiz-Castellanos L."/>
            <person name="Poulter R."/>
            <person name="Rodriguez-Romero J."/>
            <person name="Ruiz-Herrera J."/>
            <person name="Shen Y.-Q."/>
            <person name="Zeng Q."/>
            <person name="Galagan J."/>
            <person name="Birren B.W."/>
            <person name="Cuomo C.A."/>
            <person name="Wickes B.L."/>
        </authorList>
    </citation>
    <scope>NUCLEOTIDE SEQUENCE [LARGE SCALE GENOMIC DNA]</scope>
    <source>
        <strain>RA 99-880 / ATCC MYA-4621 / FGSC 9543 / NRRL 43880</strain>
    </source>
</reference>
<protein>
    <recommendedName>
        <fullName>FK506-binding protein 2B</fullName>
        <ecNumber>5.2.1.8</ecNumber>
    </recommendedName>
    <alternativeName>
        <fullName>Peptidyl-prolyl cis-trans isomerase</fullName>
        <shortName>PPIase</shortName>
    </alternativeName>
    <alternativeName>
        <fullName>Rotamase</fullName>
    </alternativeName>
</protein>
<name>FKB2B_RHIO9</name>
<evidence type="ECO:0000250" key="1"/>
<evidence type="ECO:0000255" key="2"/>
<evidence type="ECO:0000255" key="3">
    <source>
        <dbReference type="PROSITE-ProRule" id="PRU00277"/>
    </source>
</evidence>
<evidence type="ECO:0000256" key="4">
    <source>
        <dbReference type="SAM" id="MobiDB-lite"/>
    </source>
</evidence>
<evidence type="ECO:0000305" key="5"/>
<organism>
    <name type="scientific">Rhizopus delemar (strain RA 99-880 / ATCC MYA-4621 / FGSC 9543 / NRRL 43880)</name>
    <name type="common">Mucormycosis agent</name>
    <name type="synonym">Rhizopus arrhizus var. delemar</name>
    <dbReference type="NCBI Taxonomy" id="246409"/>
    <lineage>
        <taxon>Eukaryota</taxon>
        <taxon>Fungi</taxon>
        <taxon>Fungi incertae sedis</taxon>
        <taxon>Mucoromycota</taxon>
        <taxon>Mucoromycotina</taxon>
        <taxon>Mucoromycetes</taxon>
        <taxon>Mucorales</taxon>
        <taxon>Mucorineae</taxon>
        <taxon>Rhizopodaceae</taxon>
        <taxon>Rhizopus</taxon>
    </lineage>
</organism>
<proteinExistence type="inferred from homology"/>
<gene>
    <name type="primary">FKBP3</name>
    <name type="synonym">fpr3</name>
    <name type="ORF">RO3G_11675</name>
</gene>
<keyword id="KW-0175">Coiled coil</keyword>
<keyword id="KW-0413">Isomerase</keyword>
<keyword id="KW-0472">Membrane</keyword>
<keyword id="KW-1185">Reference proteome</keyword>
<keyword id="KW-0697">Rotamase</keyword>
<keyword id="KW-0732">Signal</keyword>
<keyword id="KW-0812">Transmembrane</keyword>
<keyword id="KW-1133">Transmembrane helix</keyword>
<comment type="function">
    <text evidence="1">PPIases accelerate the folding of proteins. It catalyzes the cis-trans isomerization of proline imidic peptide bonds in oligopeptides (By similarity).</text>
</comment>
<comment type="catalytic activity">
    <reaction>
        <text>[protein]-peptidylproline (omega=180) = [protein]-peptidylproline (omega=0)</text>
        <dbReference type="Rhea" id="RHEA:16237"/>
        <dbReference type="Rhea" id="RHEA-COMP:10747"/>
        <dbReference type="Rhea" id="RHEA-COMP:10748"/>
        <dbReference type="ChEBI" id="CHEBI:83833"/>
        <dbReference type="ChEBI" id="CHEBI:83834"/>
        <dbReference type="EC" id="5.2.1.8"/>
    </reaction>
</comment>
<comment type="activity regulation">
    <text evidence="1">Inhibited by both FK506 and rapamycin.</text>
</comment>
<comment type="subcellular location">
    <subcellularLocation>
        <location evidence="5">Membrane</location>
        <topology evidence="5">Single-pass membrane protein</topology>
    </subcellularLocation>
</comment>
<comment type="similarity">
    <text evidence="5">Belongs to the FKBP-type PPIase family. FKBP2 subfamily.</text>
</comment>
<feature type="signal peptide" evidence="2">
    <location>
        <begin position="1"/>
        <end position="19"/>
    </location>
</feature>
<feature type="chain" id="PRO_0000244728" description="FK506-binding protein 2B">
    <location>
        <begin position="20"/>
        <end position="209"/>
    </location>
</feature>
<feature type="transmembrane region" description="Helical" evidence="2">
    <location>
        <begin position="157"/>
        <end position="177"/>
    </location>
</feature>
<feature type="domain" description="PPIase FKBP-type" evidence="3">
    <location>
        <begin position="47"/>
        <end position="136"/>
    </location>
</feature>
<feature type="region of interest" description="Disordered" evidence="4">
    <location>
        <begin position="190"/>
        <end position="209"/>
    </location>
</feature>
<feature type="coiled-coil region" evidence="2">
    <location>
        <begin position="178"/>
        <end position="207"/>
    </location>
</feature>
<feature type="compositionally biased region" description="Basic and acidic residues" evidence="4">
    <location>
        <begin position="200"/>
        <end position="209"/>
    </location>
</feature>
<dbReference type="EC" id="5.2.1.8"/>
<dbReference type="EMBL" id="CH476740">
    <property type="protein sequence ID" value="EIE86964.1"/>
    <property type="molecule type" value="Genomic_DNA"/>
</dbReference>
<dbReference type="SMR" id="P0C1J5"/>
<dbReference type="STRING" id="246409.P0C1J5"/>
<dbReference type="VEuPathDB" id="FungiDB:RO3G_11675"/>
<dbReference type="eggNOG" id="KOG0549">
    <property type="taxonomic scope" value="Eukaryota"/>
</dbReference>
<dbReference type="InParanoid" id="P0C1J5"/>
<dbReference type="OMA" id="KPASCEI"/>
<dbReference type="OrthoDB" id="59160at4827"/>
<dbReference type="Proteomes" id="UP000009138">
    <property type="component" value="Unassembled WGS sequence"/>
</dbReference>
<dbReference type="GO" id="GO:0005783">
    <property type="term" value="C:endoplasmic reticulum"/>
    <property type="evidence" value="ECO:0007669"/>
    <property type="project" value="TreeGrafter"/>
</dbReference>
<dbReference type="GO" id="GO:0016020">
    <property type="term" value="C:membrane"/>
    <property type="evidence" value="ECO:0007669"/>
    <property type="project" value="UniProtKB-SubCell"/>
</dbReference>
<dbReference type="GO" id="GO:0003755">
    <property type="term" value="F:peptidyl-prolyl cis-trans isomerase activity"/>
    <property type="evidence" value="ECO:0007669"/>
    <property type="project" value="UniProtKB-KW"/>
</dbReference>
<dbReference type="GO" id="GO:0061077">
    <property type="term" value="P:chaperone-mediated protein folding"/>
    <property type="evidence" value="ECO:0007669"/>
    <property type="project" value="InterPro"/>
</dbReference>
<dbReference type="FunFam" id="3.10.50.40:FF:000006">
    <property type="entry name" value="Peptidyl-prolyl cis-trans isomerase"/>
    <property type="match status" value="1"/>
</dbReference>
<dbReference type="Gene3D" id="3.10.50.40">
    <property type="match status" value="1"/>
</dbReference>
<dbReference type="InterPro" id="IPR044609">
    <property type="entry name" value="FKBP2/11"/>
</dbReference>
<dbReference type="InterPro" id="IPR046357">
    <property type="entry name" value="PPIase_dom_sf"/>
</dbReference>
<dbReference type="InterPro" id="IPR001179">
    <property type="entry name" value="PPIase_FKBP_dom"/>
</dbReference>
<dbReference type="PANTHER" id="PTHR45779">
    <property type="entry name" value="PEPTIDYLPROLYL ISOMERASE"/>
    <property type="match status" value="1"/>
</dbReference>
<dbReference type="PANTHER" id="PTHR45779:SF7">
    <property type="entry name" value="PEPTIDYLPROLYL ISOMERASE"/>
    <property type="match status" value="1"/>
</dbReference>
<dbReference type="Pfam" id="PF00254">
    <property type="entry name" value="FKBP_C"/>
    <property type="match status" value="1"/>
</dbReference>
<dbReference type="SUPFAM" id="SSF54534">
    <property type="entry name" value="FKBP-like"/>
    <property type="match status" value="1"/>
</dbReference>
<dbReference type="PROSITE" id="PS50059">
    <property type="entry name" value="FKBP_PPIASE"/>
    <property type="match status" value="1"/>
</dbReference>